<dbReference type="EC" id="2.5.1.21" evidence="3 6"/>
<dbReference type="EMBL" id="L06070">
    <property type="protein sequence ID" value="AAA60582.1"/>
    <property type="molecule type" value="mRNA"/>
</dbReference>
<dbReference type="EMBL" id="L06105">
    <property type="protein sequence ID" value="AAA36645.1"/>
    <property type="molecule type" value="mRNA"/>
</dbReference>
<dbReference type="EMBL" id="X69141">
    <property type="protein sequence ID" value="CAA48896.1"/>
    <property type="molecule type" value="mRNA"/>
</dbReference>
<dbReference type="EMBL" id="S76822">
    <property type="protein sequence ID" value="AAB33404.1"/>
    <property type="molecule type" value="mRNA"/>
</dbReference>
<dbReference type="EMBL" id="AK057726">
    <property type="protein sequence ID" value="BAG51957.1"/>
    <property type="molecule type" value="mRNA"/>
</dbReference>
<dbReference type="EMBL" id="AK293545">
    <property type="protein sequence ID" value="BAH11529.1"/>
    <property type="molecule type" value="mRNA"/>
</dbReference>
<dbReference type="EMBL" id="AK296043">
    <property type="protein sequence ID" value="BAG58807.1"/>
    <property type="molecule type" value="mRNA"/>
</dbReference>
<dbReference type="EMBL" id="AK300059">
    <property type="protein sequence ID" value="BAG61868.1"/>
    <property type="molecule type" value="mRNA"/>
</dbReference>
<dbReference type="EMBL" id="AK315993">
    <property type="protein sequence ID" value="BAH14364.1"/>
    <property type="molecule type" value="mRNA"/>
</dbReference>
<dbReference type="EMBL" id="AK316351">
    <property type="protein sequence ID" value="BAH14722.1"/>
    <property type="molecule type" value="mRNA"/>
</dbReference>
<dbReference type="EMBL" id="AK316531">
    <property type="protein sequence ID" value="BAH14902.1"/>
    <property type="molecule type" value="mRNA"/>
</dbReference>
<dbReference type="EMBL" id="AK316534">
    <property type="protein sequence ID" value="BAH14905.1"/>
    <property type="molecule type" value="mRNA"/>
</dbReference>
<dbReference type="EMBL" id="AC069185">
    <property type="status" value="NOT_ANNOTATED_CDS"/>
    <property type="molecule type" value="Genomic_DNA"/>
</dbReference>
<dbReference type="EMBL" id="BC003573">
    <property type="protein sequence ID" value="AAH03573.1"/>
    <property type="molecule type" value="mRNA"/>
</dbReference>
<dbReference type="EMBL" id="BC009251">
    <property type="protein sequence ID" value="AAH09251.1"/>
    <property type="molecule type" value="mRNA"/>
</dbReference>
<dbReference type="EMBL" id="BC029641">
    <property type="protein sequence ID" value="AAH29641.1"/>
    <property type="molecule type" value="mRNA"/>
</dbReference>
<dbReference type="CCDS" id="CCDS5985.1">
    <molecule id="P37268-1"/>
</dbReference>
<dbReference type="CCDS" id="CCDS75696.1">
    <molecule id="P37268-2"/>
</dbReference>
<dbReference type="CCDS" id="CCDS75697.1">
    <molecule id="P37268-3"/>
</dbReference>
<dbReference type="PIR" id="A45998">
    <property type="entry name" value="A45998"/>
</dbReference>
<dbReference type="PIR" id="I38245">
    <property type="entry name" value="I38245"/>
</dbReference>
<dbReference type="PIR" id="I52090">
    <property type="entry name" value="I52090"/>
</dbReference>
<dbReference type="RefSeq" id="NP_001274671.1">
    <molecule id="P37268-1"/>
    <property type="nucleotide sequence ID" value="NM_001287742.2"/>
</dbReference>
<dbReference type="RefSeq" id="NP_001274672.1">
    <molecule id="P37268-1"/>
    <property type="nucleotide sequence ID" value="NM_001287743.2"/>
</dbReference>
<dbReference type="RefSeq" id="NP_001274673.1">
    <molecule id="P37268-2"/>
    <property type="nucleotide sequence ID" value="NM_001287744.2"/>
</dbReference>
<dbReference type="RefSeq" id="NP_001274674.1">
    <molecule id="P37268-2"/>
    <property type="nucleotide sequence ID" value="NM_001287745.2"/>
</dbReference>
<dbReference type="RefSeq" id="NP_001274676.1">
    <molecule id="P37268-2"/>
    <property type="nucleotide sequence ID" value="NM_001287747.2"/>
</dbReference>
<dbReference type="RefSeq" id="NP_001274677.1">
    <molecule id="P37268-2"/>
    <property type="nucleotide sequence ID" value="NM_001287748.2"/>
</dbReference>
<dbReference type="RefSeq" id="NP_001274678.1">
    <molecule id="P37268-2"/>
    <property type="nucleotide sequence ID" value="NM_001287749.2"/>
</dbReference>
<dbReference type="RefSeq" id="NP_001274679.1">
    <property type="nucleotide sequence ID" value="NM_001287750.1"/>
</dbReference>
<dbReference type="RefSeq" id="NP_001274680.1">
    <molecule id="P37268-3"/>
    <property type="nucleotide sequence ID" value="NM_001287751.2"/>
</dbReference>
<dbReference type="RefSeq" id="NP_001274685.1">
    <property type="nucleotide sequence ID" value="NM_001287756.1"/>
</dbReference>
<dbReference type="RefSeq" id="NP_004453.3">
    <molecule id="P37268-1"/>
    <property type="nucleotide sequence ID" value="NM_004462.4"/>
</dbReference>
<dbReference type="RefSeq" id="XP_016868706.1">
    <property type="nucleotide sequence ID" value="XM_017013217.1"/>
</dbReference>
<dbReference type="PDB" id="1EZF">
    <property type="method" value="X-ray"/>
    <property type="resolution" value="2.15 A"/>
    <property type="chains" value="A/B/C=31-370"/>
</dbReference>
<dbReference type="PDB" id="3ASX">
    <property type="method" value="X-ray"/>
    <property type="resolution" value="2.00 A"/>
    <property type="chains" value="A=31-370"/>
</dbReference>
<dbReference type="PDB" id="3LEE">
    <property type="method" value="X-ray"/>
    <property type="resolution" value="3.20 A"/>
    <property type="chains" value="A/B/C/D/E/F=31-370"/>
</dbReference>
<dbReference type="PDB" id="3Q2Z">
    <property type="method" value="X-ray"/>
    <property type="resolution" value="2.00 A"/>
    <property type="chains" value="A=31-370"/>
</dbReference>
<dbReference type="PDB" id="3Q30">
    <property type="method" value="X-ray"/>
    <property type="resolution" value="2.00 A"/>
    <property type="chains" value="A=31-370"/>
</dbReference>
<dbReference type="PDB" id="3V66">
    <property type="method" value="X-ray"/>
    <property type="resolution" value="1.80 A"/>
    <property type="chains" value="A=31-370"/>
</dbReference>
<dbReference type="PDB" id="3VJ8">
    <property type="method" value="X-ray"/>
    <property type="resolution" value="1.52 A"/>
    <property type="chains" value="A=31-370"/>
</dbReference>
<dbReference type="PDB" id="3VJ9">
    <property type="method" value="X-ray"/>
    <property type="resolution" value="1.52 A"/>
    <property type="chains" value="A=31-370"/>
</dbReference>
<dbReference type="PDB" id="3VJA">
    <property type="method" value="X-ray"/>
    <property type="resolution" value="1.76 A"/>
    <property type="chains" value="A/B=31-370"/>
</dbReference>
<dbReference type="PDB" id="3VJB">
    <property type="method" value="X-ray"/>
    <property type="resolution" value="2.05 A"/>
    <property type="chains" value="A/B/C/D/E/F=31-370"/>
</dbReference>
<dbReference type="PDB" id="3VJC">
    <property type="method" value="X-ray"/>
    <property type="resolution" value="1.89 A"/>
    <property type="chains" value="A/B/C/D/E/F=31-370"/>
</dbReference>
<dbReference type="PDB" id="3WC9">
    <property type="method" value="X-ray"/>
    <property type="resolution" value="2.82 A"/>
    <property type="chains" value="A/B/C/D/E/F=31-370"/>
</dbReference>
<dbReference type="PDB" id="3WCD">
    <property type="method" value="X-ray"/>
    <property type="resolution" value="2.75 A"/>
    <property type="chains" value="A/B/C/D/E/F=31-370"/>
</dbReference>
<dbReference type="PDB" id="3WCF">
    <property type="method" value="X-ray"/>
    <property type="resolution" value="2.22 A"/>
    <property type="chains" value="A/B/C/D/E/F=31-370"/>
</dbReference>
<dbReference type="PDB" id="3WCH">
    <property type="method" value="X-ray"/>
    <property type="resolution" value="2.50 A"/>
    <property type="chains" value="A/B/C/D/E/F=31-370"/>
</dbReference>
<dbReference type="PDB" id="3WCI">
    <property type="method" value="X-ray"/>
    <property type="resolution" value="2.30 A"/>
    <property type="chains" value="A/B/C/D/E/F=31-370"/>
</dbReference>
<dbReference type="PDB" id="3WCJ">
    <property type="method" value="X-ray"/>
    <property type="resolution" value="2.20 A"/>
    <property type="chains" value="A/B/C/D/E/F=31-370"/>
</dbReference>
<dbReference type="PDB" id="3WCL">
    <property type="method" value="X-ray"/>
    <property type="resolution" value="2.24 A"/>
    <property type="chains" value="A/B/C/D/E/F=31-370"/>
</dbReference>
<dbReference type="PDB" id="3WCM">
    <property type="method" value="X-ray"/>
    <property type="resolution" value="2.06 A"/>
    <property type="chains" value="A/B/C/D/E/F=31-370"/>
</dbReference>
<dbReference type="PDB" id="3WEF">
    <property type="method" value="X-ray"/>
    <property type="resolution" value="2.35 A"/>
    <property type="chains" value="A/B/C/D/E/F=31-370"/>
</dbReference>
<dbReference type="PDB" id="3WEG">
    <property type="method" value="X-ray"/>
    <property type="resolution" value="1.75 A"/>
    <property type="chains" value="A=31-370"/>
</dbReference>
<dbReference type="PDB" id="3WEH">
    <property type="method" value="X-ray"/>
    <property type="resolution" value="1.87 A"/>
    <property type="chains" value="A=31-370"/>
</dbReference>
<dbReference type="PDB" id="3WEI">
    <property type="method" value="X-ray"/>
    <property type="resolution" value="1.79 A"/>
    <property type="chains" value="A=31-370"/>
</dbReference>
<dbReference type="PDB" id="3WEJ">
    <property type="method" value="X-ray"/>
    <property type="resolution" value="2.00 A"/>
    <property type="chains" value="A=31-370"/>
</dbReference>
<dbReference type="PDB" id="3WEK">
    <property type="method" value="X-ray"/>
    <property type="resolution" value="1.85 A"/>
    <property type="chains" value="A=31-370"/>
</dbReference>
<dbReference type="PDB" id="3WSA">
    <property type="method" value="X-ray"/>
    <property type="resolution" value="2.90 A"/>
    <property type="chains" value="A/B/C/D/E/F=31-370"/>
</dbReference>
<dbReference type="PDB" id="6PYJ">
    <property type="method" value="X-ray"/>
    <property type="resolution" value="1.44 A"/>
    <property type="chains" value="C=280-288"/>
</dbReference>
<dbReference type="PDB" id="6PYV">
    <property type="method" value="X-ray"/>
    <property type="resolution" value="1.45 A"/>
    <property type="chains" value="C=280-288"/>
</dbReference>
<dbReference type="PDB" id="6PYW">
    <property type="method" value="X-ray"/>
    <property type="resolution" value="1.38 A"/>
    <property type="chains" value="C=280-288"/>
</dbReference>
<dbReference type="PDB" id="6PZ5">
    <property type="method" value="X-ray"/>
    <property type="resolution" value="1.53 A"/>
    <property type="chains" value="C=280-288"/>
</dbReference>
<dbReference type="PDB" id="8WTQ">
    <property type="method" value="X-ray"/>
    <property type="resolution" value="2.00 A"/>
    <property type="chains" value="A=31-370"/>
</dbReference>
<dbReference type="PDB" id="8WTR">
    <property type="method" value="X-ray"/>
    <property type="resolution" value="2.00 A"/>
    <property type="chains" value="A=31-370"/>
</dbReference>
<dbReference type="PDBsum" id="1EZF"/>
<dbReference type="PDBsum" id="3ASX"/>
<dbReference type="PDBsum" id="3LEE"/>
<dbReference type="PDBsum" id="3Q2Z"/>
<dbReference type="PDBsum" id="3Q30"/>
<dbReference type="PDBsum" id="3V66"/>
<dbReference type="PDBsum" id="3VJ8"/>
<dbReference type="PDBsum" id="3VJ9"/>
<dbReference type="PDBsum" id="3VJA"/>
<dbReference type="PDBsum" id="3VJB"/>
<dbReference type="PDBsum" id="3VJC"/>
<dbReference type="PDBsum" id="3WC9"/>
<dbReference type="PDBsum" id="3WCD"/>
<dbReference type="PDBsum" id="3WCF"/>
<dbReference type="PDBsum" id="3WCH"/>
<dbReference type="PDBsum" id="3WCI"/>
<dbReference type="PDBsum" id="3WCJ"/>
<dbReference type="PDBsum" id="3WCL"/>
<dbReference type="PDBsum" id="3WCM"/>
<dbReference type="PDBsum" id="3WEF"/>
<dbReference type="PDBsum" id="3WEG"/>
<dbReference type="PDBsum" id="3WEH"/>
<dbReference type="PDBsum" id="3WEI"/>
<dbReference type="PDBsum" id="3WEJ"/>
<dbReference type="PDBsum" id="3WEK"/>
<dbReference type="PDBsum" id="3WSA"/>
<dbReference type="PDBsum" id="6PYJ"/>
<dbReference type="PDBsum" id="6PYV"/>
<dbReference type="PDBsum" id="6PYW"/>
<dbReference type="PDBsum" id="6PZ5"/>
<dbReference type="PDBsum" id="8WTQ"/>
<dbReference type="PDBsum" id="8WTR"/>
<dbReference type="SMR" id="P37268"/>
<dbReference type="BioGRID" id="108516">
    <property type="interactions" value="160"/>
</dbReference>
<dbReference type="FunCoup" id="P37268">
    <property type="interactions" value="1153"/>
</dbReference>
<dbReference type="IntAct" id="P37268">
    <property type="interactions" value="78"/>
</dbReference>
<dbReference type="MINT" id="P37268"/>
<dbReference type="STRING" id="9606.ENSP00000491537"/>
<dbReference type="BindingDB" id="P37268"/>
<dbReference type="ChEMBL" id="CHEMBL3338"/>
<dbReference type="DrugBank" id="DB07780">
    <property type="generic name" value="Farnesyl diphosphate"/>
</dbReference>
<dbReference type="DrugBank" id="DB05317">
    <property type="generic name" value="TAK-475"/>
</dbReference>
<dbReference type="DrugCentral" id="P37268"/>
<dbReference type="GuidetoPHARMACOLOGY" id="645"/>
<dbReference type="SwissLipids" id="SLP:000000138"/>
<dbReference type="GlyGen" id="P37268">
    <property type="glycosylation" value="1 site, 1 O-linked glycan (1 site)"/>
</dbReference>
<dbReference type="iPTMnet" id="P37268"/>
<dbReference type="MetOSite" id="P37268"/>
<dbReference type="PhosphoSitePlus" id="P37268"/>
<dbReference type="SwissPalm" id="P37268"/>
<dbReference type="BioMuta" id="FDFT1"/>
<dbReference type="DMDM" id="585126"/>
<dbReference type="jPOST" id="P37268"/>
<dbReference type="MassIVE" id="P37268"/>
<dbReference type="PaxDb" id="9606-ENSP00000480828"/>
<dbReference type="PeptideAtlas" id="P37268"/>
<dbReference type="ProteomicsDB" id="3554"/>
<dbReference type="ProteomicsDB" id="4370"/>
<dbReference type="ProteomicsDB" id="5075"/>
<dbReference type="ProteomicsDB" id="55271">
    <molecule id="P37268-1"/>
</dbReference>
<dbReference type="ProteomicsDB" id="6339"/>
<dbReference type="Pumba" id="P37268"/>
<dbReference type="Antibodypedia" id="1355">
    <property type="antibodies" value="445 antibodies from 32 providers"/>
</dbReference>
<dbReference type="DNASU" id="2222"/>
<dbReference type="Ensembl" id="ENST00000220584.9">
    <molecule id="P37268-1"/>
    <property type="protein sequence ID" value="ENSP00000220584.4"/>
    <property type="gene ID" value="ENSG00000079459.14"/>
</dbReference>
<dbReference type="Ensembl" id="ENST00000443614.6">
    <molecule id="P37268-5"/>
    <property type="protein sequence ID" value="ENSP00000390367.2"/>
    <property type="gene ID" value="ENSG00000079459.14"/>
</dbReference>
<dbReference type="Ensembl" id="ENST00000528643.5">
    <molecule id="P37268-3"/>
    <property type="protein sequence ID" value="ENSP00000431649.1"/>
    <property type="gene ID" value="ENSG00000079459.14"/>
</dbReference>
<dbReference type="Ensembl" id="ENST00000528812.5">
    <molecule id="P37268-2"/>
    <property type="protein sequence ID" value="ENSP00000431749.1"/>
    <property type="gene ID" value="ENSG00000079459.14"/>
</dbReference>
<dbReference type="Ensembl" id="ENST00000530337.6">
    <molecule id="P37268-1"/>
    <property type="protein sequence ID" value="ENSP00000431852.2"/>
    <property type="gene ID" value="ENSG00000079459.14"/>
</dbReference>
<dbReference type="Ensembl" id="ENST00000530664.5">
    <molecule id="P37268-2"/>
    <property type="protein sequence ID" value="ENSP00000432331.1"/>
    <property type="gene ID" value="ENSG00000079459.14"/>
</dbReference>
<dbReference type="Ensembl" id="ENST00000615631.5">
    <molecule id="P37268-1"/>
    <property type="protein sequence ID" value="ENSP00000481481.1"/>
    <property type="gene ID" value="ENSG00000079459.14"/>
</dbReference>
<dbReference type="Ensembl" id="ENST00000622850.3">
    <molecule id="P37268-2"/>
    <property type="protein sequence ID" value="ENSP00000484122.1"/>
    <property type="gene ID" value="ENSG00000079459.14"/>
</dbReference>
<dbReference type="Ensembl" id="ENST00000647069.3">
    <molecule id="P37268-5"/>
    <property type="protein sequence ID" value="ENSP00000495060.2"/>
    <property type="gene ID" value="ENSG00000284967.3"/>
</dbReference>
<dbReference type="Ensembl" id="ENST00000647178.2">
    <molecule id="P37268-1"/>
    <property type="protein sequence ID" value="ENSP00000496723.1"/>
    <property type="gene ID" value="ENSG00000284967.3"/>
</dbReference>
<dbReference type="Ensembl" id="ENST00000710773.1">
    <molecule id="P37268-2"/>
    <property type="protein sequence ID" value="ENSP00000518476.1"/>
    <property type="gene ID" value="ENSG00000284967.3"/>
</dbReference>
<dbReference type="Ensembl" id="ENST00000710774.1">
    <molecule id="P37268-1"/>
    <property type="protein sequence ID" value="ENSP00000518477.1"/>
    <property type="gene ID" value="ENSG00000284967.3"/>
</dbReference>
<dbReference type="Ensembl" id="ENST00000710775.1">
    <molecule id="P37268-1"/>
    <property type="protein sequence ID" value="ENSP00000518478.1"/>
    <property type="gene ID" value="ENSG00000284967.3"/>
</dbReference>
<dbReference type="Ensembl" id="ENST00000710778.1">
    <molecule id="P37268-3"/>
    <property type="protein sequence ID" value="ENSP00000518480.1"/>
    <property type="gene ID" value="ENSG00000284967.3"/>
</dbReference>
<dbReference type="Ensembl" id="ENST00000710780.1">
    <molecule id="P37268-2"/>
    <property type="protein sequence ID" value="ENSP00000518482.1"/>
    <property type="gene ID" value="ENSG00000284967.3"/>
</dbReference>
<dbReference type="Ensembl" id="ENST00000710781.1">
    <molecule id="P37268-2"/>
    <property type="protein sequence ID" value="ENSP00000518483.1"/>
    <property type="gene ID" value="ENSG00000284967.3"/>
</dbReference>
<dbReference type="GeneID" id="2222"/>
<dbReference type="KEGG" id="hsa:2222"/>
<dbReference type="MANE-Select" id="ENST00000220584.9">
    <property type="protein sequence ID" value="ENSP00000220584.4"/>
    <property type="RefSeq nucleotide sequence ID" value="NM_004462.5"/>
    <property type="RefSeq protein sequence ID" value="NP_004453.3"/>
</dbReference>
<dbReference type="UCSC" id="uc003wuh.4">
    <molecule id="P37268-1"/>
    <property type="organism name" value="human"/>
</dbReference>
<dbReference type="AGR" id="HGNC:3629"/>
<dbReference type="CTD" id="2222"/>
<dbReference type="DisGeNET" id="2222"/>
<dbReference type="GeneCards" id="FDFT1"/>
<dbReference type="GeneReviews" id="FDFT1"/>
<dbReference type="HGNC" id="HGNC:3629">
    <property type="gene designation" value="FDFT1"/>
</dbReference>
<dbReference type="HPA" id="ENSG00000079459">
    <property type="expression patterns" value="Low tissue specificity"/>
</dbReference>
<dbReference type="MalaCards" id="FDFT1"/>
<dbReference type="MIM" id="184420">
    <property type="type" value="gene"/>
</dbReference>
<dbReference type="MIM" id="618156">
    <property type="type" value="phenotype"/>
</dbReference>
<dbReference type="neXtProt" id="NX_P37268"/>
<dbReference type="OpenTargets" id="ENSG00000079459"/>
<dbReference type="PharmGKB" id="PA28073"/>
<dbReference type="VEuPathDB" id="HostDB:ENSG00000079459"/>
<dbReference type="eggNOG" id="KOG1459">
    <property type="taxonomic scope" value="Eukaryota"/>
</dbReference>
<dbReference type="GeneTree" id="ENSGT00390000016034"/>
<dbReference type="HOGENOM" id="CLU_031981_0_2_1"/>
<dbReference type="InParanoid" id="P37268"/>
<dbReference type="OMA" id="GEACQLM"/>
<dbReference type="OrthoDB" id="431150at2759"/>
<dbReference type="PAN-GO" id="P37268">
    <property type="GO annotations" value="5 GO annotations based on evolutionary models"/>
</dbReference>
<dbReference type="PhylomeDB" id="P37268"/>
<dbReference type="TreeFam" id="TF105316"/>
<dbReference type="BioCyc" id="MetaCyc:HS01329-MONOMER"/>
<dbReference type="BRENDA" id="2.5.1.21">
    <property type="organism ID" value="2681"/>
</dbReference>
<dbReference type="PathwayCommons" id="P37268"/>
<dbReference type="Reactome" id="R-HSA-191273">
    <property type="pathway name" value="Cholesterol biosynthesis"/>
</dbReference>
<dbReference type="Reactome" id="R-HSA-1989781">
    <property type="pathway name" value="PPARA activates gene expression"/>
</dbReference>
<dbReference type="Reactome" id="R-HSA-2426168">
    <property type="pathway name" value="Activation of gene expression by SREBF (SREBP)"/>
</dbReference>
<dbReference type="SABIO-RK" id="P37268"/>
<dbReference type="SignaLink" id="P37268"/>
<dbReference type="UniPathway" id="UPA00767">
    <property type="reaction ID" value="UER00751"/>
</dbReference>
<dbReference type="BioGRID-ORCS" id="2222">
    <property type="hits" value="70 hits in 1157 CRISPR screens"/>
</dbReference>
<dbReference type="ChiTaRS" id="FDFT1">
    <property type="organism name" value="human"/>
</dbReference>
<dbReference type="EvolutionaryTrace" id="P37268"/>
<dbReference type="GenomeRNAi" id="2222"/>
<dbReference type="Pharos" id="P37268">
    <property type="development level" value="Tchem"/>
</dbReference>
<dbReference type="PRO" id="PR:P37268"/>
<dbReference type="Proteomes" id="UP000005640">
    <property type="component" value="Chromosome 8"/>
</dbReference>
<dbReference type="RNAct" id="P37268">
    <property type="molecule type" value="protein"/>
</dbReference>
<dbReference type="Bgee" id="ENSG00000079459">
    <property type="expression patterns" value="Expressed in ganglionic eminence and 158 other cell types or tissues"/>
</dbReference>
<dbReference type="ExpressionAtlas" id="P37268">
    <property type="expression patterns" value="baseline and differential"/>
</dbReference>
<dbReference type="GO" id="GO:0005783">
    <property type="term" value="C:endoplasmic reticulum"/>
    <property type="evidence" value="ECO:0000314"/>
    <property type="project" value="HPA"/>
</dbReference>
<dbReference type="GO" id="GO:0005789">
    <property type="term" value="C:endoplasmic reticulum membrane"/>
    <property type="evidence" value="ECO:0000250"/>
    <property type="project" value="UniProtKB"/>
</dbReference>
<dbReference type="GO" id="GO:0016020">
    <property type="term" value="C:membrane"/>
    <property type="evidence" value="ECO:0000304"/>
    <property type="project" value="ProtInc"/>
</dbReference>
<dbReference type="GO" id="GO:0046872">
    <property type="term" value="F:metal ion binding"/>
    <property type="evidence" value="ECO:0007669"/>
    <property type="project" value="UniProtKB-KW"/>
</dbReference>
<dbReference type="GO" id="GO:0051996">
    <property type="term" value="F:squalene synthase [NAD(P)H] activity"/>
    <property type="evidence" value="ECO:0000318"/>
    <property type="project" value="GO_Central"/>
</dbReference>
<dbReference type="GO" id="GO:0006695">
    <property type="term" value="P:cholesterol biosynthetic process"/>
    <property type="evidence" value="ECO:0000318"/>
    <property type="project" value="GO_Central"/>
</dbReference>
<dbReference type="GO" id="GO:0045338">
    <property type="term" value="P:farnesyl diphosphate metabolic process"/>
    <property type="evidence" value="ECO:0000318"/>
    <property type="project" value="GO_Central"/>
</dbReference>
<dbReference type="GO" id="GO:0006694">
    <property type="term" value="P:steroid biosynthetic process"/>
    <property type="evidence" value="ECO:0000304"/>
    <property type="project" value="ProtInc"/>
</dbReference>
<dbReference type="CDD" id="cd00683">
    <property type="entry name" value="Trans_IPPS_HH"/>
    <property type="match status" value="1"/>
</dbReference>
<dbReference type="FunFam" id="1.10.600.10:FF:000053">
    <property type="entry name" value="Squalene synthase"/>
    <property type="match status" value="1"/>
</dbReference>
<dbReference type="Gene3D" id="1.10.600.10">
    <property type="entry name" value="Farnesyl Diphosphate Synthase"/>
    <property type="match status" value="1"/>
</dbReference>
<dbReference type="InterPro" id="IPR008949">
    <property type="entry name" value="Isoprenoid_synthase_dom_sf"/>
</dbReference>
<dbReference type="InterPro" id="IPR002060">
    <property type="entry name" value="Squ/phyt_synthse"/>
</dbReference>
<dbReference type="InterPro" id="IPR006449">
    <property type="entry name" value="Squal_synth-like"/>
</dbReference>
<dbReference type="InterPro" id="IPR019845">
    <property type="entry name" value="Squalene/phytoene_synthase_CS"/>
</dbReference>
<dbReference type="InterPro" id="IPR044844">
    <property type="entry name" value="Trans_IPPS_euk-type"/>
</dbReference>
<dbReference type="InterPro" id="IPR033904">
    <property type="entry name" value="Trans_IPPS_HH"/>
</dbReference>
<dbReference type="NCBIfam" id="TIGR01559">
    <property type="entry name" value="squal_synth"/>
    <property type="match status" value="1"/>
</dbReference>
<dbReference type="PANTHER" id="PTHR11626">
    <property type="entry name" value="FARNESYL-DIPHOSPHATE FARNESYLTRANSFERASE"/>
    <property type="match status" value="1"/>
</dbReference>
<dbReference type="PANTHER" id="PTHR11626:SF2">
    <property type="entry name" value="SQUALENE SYNTHASE"/>
    <property type="match status" value="1"/>
</dbReference>
<dbReference type="Pfam" id="PF00494">
    <property type="entry name" value="SQS_PSY"/>
    <property type="match status" value="1"/>
</dbReference>
<dbReference type="SFLD" id="SFLDS00005">
    <property type="entry name" value="Isoprenoid_Synthase_Type_I"/>
    <property type="match status" value="1"/>
</dbReference>
<dbReference type="SFLD" id="SFLDG01018">
    <property type="entry name" value="Squalene/Phytoene_Synthase_Lik"/>
    <property type="match status" value="1"/>
</dbReference>
<dbReference type="SUPFAM" id="SSF48576">
    <property type="entry name" value="Terpenoid synthases"/>
    <property type="match status" value="1"/>
</dbReference>
<dbReference type="PROSITE" id="PS01044">
    <property type="entry name" value="SQUALEN_PHYTOEN_SYN_1"/>
    <property type="match status" value="1"/>
</dbReference>
<dbReference type="PROSITE" id="PS01045">
    <property type="entry name" value="SQUALEN_PHYTOEN_SYN_2"/>
    <property type="match status" value="1"/>
</dbReference>
<organism>
    <name type="scientific">Homo sapiens</name>
    <name type="common">Human</name>
    <dbReference type="NCBI Taxonomy" id="9606"/>
    <lineage>
        <taxon>Eukaryota</taxon>
        <taxon>Metazoa</taxon>
        <taxon>Chordata</taxon>
        <taxon>Craniata</taxon>
        <taxon>Vertebrata</taxon>
        <taxon>Euteleostomi</taxon>
        <taxon>Mammalia</taxon>
        <taxon>Eutheria</taxon>
        <taxon>Euarchontoglires</taxon>
        <taxon>Primates</taxon>
        <taxon>Haplorrhini</taxon>
        <taxon>Catarrhini</taxon>
        <taxon>Hominidae</taxon>
        <taxon>Homo</taxon>
    </lineage>
</organism>
<feature type="chain" id="PRO_0000067443" description="Squalene synthase">
    <location>
        <begin position="1"/>
        <end position="417"/>
    </location>
</feature>
<feature type="transmembrane region" description="Helical" evidence="2">
    <location>
        <begin position="284"/>
        <end position="304"/>
    </location>
</feature>
<feature type="transmembrane region" description="Helical" evidence="2">
    <location>
        <begin position="384"/>
        <end position="404"/>
    </location>
</feature>
<feature type="binding site" evidence="11">
    <location>
        <position position="52"/>
    </location>
    <ligand>
        <name>NADP(+)</name>
        <dbReference type="ChEBI" id="CHEBI:58349"/>
    </ligand>
</feature>
<feature type="binding site" evidence="11">
    <location>
        <position position="77"/>
    </location>
    <ligand>
        <name>NADP(+)</name>
        <dbReference type="ChEBI" id="CHEBI:58349"/>
    </ligand>
</feature>
<feature type="binding site" evidence="6 13 14">
    <location>
        <position position="80"/>
    </location>
    <ligand>
        <name>Mg(2+)</name>
        <dbReference type="ChEBI" id="CHEBI:18420"/>
    </ligand>
</feature>
<feature type="binding site" evidence="6 13 14">
    <location>
        <position position="83"/>
    </location>
    <ligand>
        <name>Mg(2+)</name>
        <dbReference type="ChEBI" id="CHEBI:18420"/>
    </ligand>
</feature>
<feature type="binding site" evidence="6 13 14">
    <location>
        <position position="84"/>
    </location>
    <ligand>
        <name>Mg(2+)</name>
        <dbReference type="ChEBI" id="CHEBI:18420"/>
    </ligand>
</feature>
<feature type="binding site" evidence="11">
    <location>
        <position position="218"/>
    </location>
    <ligand>
        <name>NADP(+)</name>
        <dbReference type="ChEBI" id="CHEBI:58349"/>
    </ligand>
</feature>
<feature type="binding site" evidence="11">
    <location>
        <position position="315"/>
    </location>
    <ligand>
        <name>NADP(+)</name>
        <dbReference type="ChEBI" id="CHEBI:58349"/>
    </ligand>
</feature>
<feature type="binding site" evidence="11">
    <location>
        <position position="317"/>
    </location>
    <ligand>
        <name>NADP(+)</name>
        <dbReference type="ChEBI" id="CHEBI:58349"/>
    </ligand>
</feature>
<feature type="splice variant" id="VSP_056517" description="In isoform 4." evidence="8">
    <location>
        <begin position="1"/>
        <end position="111"/>
    </location>
</feature>
<feature type="splice variant" id="VSP_056282" description="In isoform 3." evidence="8">
    <location>
        <begin position="1"/>
        <end position="85"/>
    </location>
</feature>
<feature type="splice variant" id="VSP_056283" description="In isoform 2." evidence="8">
    <location>
        <begin position="1"/>
        <end position="64"/>
    </location>
</feature>
<feature type="splice variant" id="VSP_056518" description="In isoform 5." evidence="8">
    <location>
        <begin position="128"/>
        <end position="170"/>
    </location>
</feature>
<feature type="sequence variant" id="VAR_011786" description="Influences plasma cholesterol levels; associated with increased total cholesterol and non-high-density lipoprotein cholesterol; dbSNP:rs4731." evidence="4 5">
    <original>K</original>
    <variation>R</variation>
    <location>
        <position position="45"/>
    </location>
</feature>
<feature type="sequence variant" id="VAR_011787" description="In dbSNP:rs1804473.">
    <original>L</original>
    <variation>P</variation>
    <location>
        <position position="392"/>
    </location>
</feature>
<feature type="sequence conflict" description="In Ref. 4; AAB33404." evidence="9" ref="4">
    <original>D</original>
    <variation>N</variation>
    <location>
        <position position="353"/>
    </location>
</feature>
<feature type="sequence conflict" description="In Ref. 3; CAA48896." evidence="9" ref="3">
    <original>T</original>
    <variation>A</variation>
    <location>
        <position position="402"/>
    </location>
</feature>
<feature type="helix" evidence="15">
    <location>
        <begin position="38"/>
        <end position="51"/>
    </location>
</feature>
<feature type="helix" evidence="15">
    <location>
        <begin position="52"/>
        <end position="54"/>
    </location>
</feature>
<feature type="helix" evidence="15">
    <location>
        <begin position="55"/>
        <end position="59"/>
    </location>
</feature>
<feature type="helix" evidence="15">
    <location>
        <begin position="65"/>
        <end position="84"/>
    </location>
</feature>
<feature type="helix" evidence="15">
    <location>
        <begin position="90"/>
        <end position="103"/>
    </location>
</feature>
<feature type="turn" evidence="15">
    <location>
        <begin position="117"/>
        <end position="119"/>
    </location>
</feature>
<feature type="helix" evidence="15">
    <location>
        <begin position="120"/>
        <end position="123"/>
    </location>
</feature>
<feature type="helix" evidence="15">
    <location>
        <begin position="125"/>
        <end position="134"/>
    </location>
</feature>
<feature type="helix" evidence="15">
    <location>
        <begin position="137"/>
        <end position="156"/>
    </location>
</feature>
<feature type="helix" evidence="15">
    <location>
        <begin position="157"/>
        <end position="159"/>
    </location>
</feature>
<feature type="helix" evidence="15">
    <location>
        <begin position="165"/>
        <end position="175"/>
    </location>
</feature>
<feature type="helix" evidence="15">
    <location>
        <begin position="177"/>
        <end position="189"/>
    </location>
</feature>
<feature type="strand" evidence="17">
    <location>
        <begin position="191"/>
        <end position="193"/>
    </location>
</feature>
<feature type="helix" evidence="15">
    <location>
        <begin position="195"/>
        <end position="199"/>
    </location>
</feature>
<feature type="helix" evidence="15">
    <location>
        <begin position="201"/>
        <end position="218"/>
    </location>
</feature>
<feature type="helix" evidence="15">
    <location>
        <begin position="220"/>
        <end position="225"/>
    </location>
</feature>
<feature type="helix" evidence="15">
    <location>
        <begin position="233"/>
        <end position="236"/>
    </location>
</feature>
<feature type="turn" evidence="15">
    <location>
        <begin position="237"/>
        <end position="239"/>
    </location>
</feature>
<feature type="helix" evidence="15">
    <location>
        <begin position="243"/>
        <end position="247"/>
    </location>
</feature>
<feature type="helix" evidence="15">
    <location>
        <begin position="249"/>
        <end position="251"/>
    </location>
</feature>
<feature type="helix" evidence="15">
    <location>
        <begin position="252"/>
        <end position="267"/>
    </location>
</feature>
<feature type="helix" evidence="15">
    <location>
        <begin position="270"/>
        <end position="278"/>
    </location>
</feature>
<feature type="helix" evidence="15">
    <location>
        <begin position="283"/>
        <end position="303"/>
    </location>
</feature>
<feature type="helix" evidence="15">
    <location>
        <begin position="307"/>
        <end position="310"/>
    </location>
</feature>
<feature type="helix" evidence="15">
    <location>
        <begin position="318"/>
        <end position="327"/>
    </location>
</feature>
<feature type="strand" evidence="16">
    <location>
        <begin position="328"/>
        <end position="330"/>
    </location>
</feature>
<feature type="helix" evidence="15">
    <location>
        <begin position="331"/>
        <end position="346"/>
    </location>
</feature>
<feature type="helix" evidence="15">
    <location>
        <begin position="356"/>
        <end position="368"/>
    </location>
</feature>
<keyword id="KW-0002">3D-structure</keyword>
<keyword id="KW-0025">Alternative splicing</keyword>
<keyword id="KW-0152">Cholesterol biosynthesis</keyword>
<keyword id="KW-0153">Cholesterol metabolism</keyword>
<keyword id="KW-0256">Endoplasmic reticulum</keyword>
<keyword id="KW-0444">Lipid biosynthesis</keyword>
<keyword id="KW-0443">Lipid metabolism</keyword>
<keyword id="KW-0460">Magnesium</keyword>
<keyword id="KW-0472">Membrane</keyword>
<keyword id="KW-0479">Metal-binding</keyword>
<keyword id="KW-0511">Multifunctional enzyme</keyword>
<keyword id="KW-0520">NAD</keyword>
<keyword id="KW-0521">NADP</keyword>
<keyword id="KW-1267">Proteomics identification</keyword>
<keyword id="KW-1185">Reference proteome</keyword>
<keyword id="KW-0752">Steroid biosynthesis</keyword>
<keyword id="KW-0753">Steroid metabolism</keyword>
<keyword id="KW-0756">Sterol biosynthesis</keyword>
<keyword id="KW-1207">Sterol metabolism</keyword>
<keyword id="KW-0808">Transferase</keyword>
<keyword id="KW-0812">Transmembrane</keyword>
<keyword id="KW-1133">Transmembrane helix</keyword>
<gene>
    <name type="primary">FDFT1</name>
</gene>
<accession>P37268</accession>
<accession>B3KQ95</accession>
<accession>B4DJE5</accession>
<accession>B4DT56</accession>
<accession>B7Z1J3</accession>
<accession>Q96GT0</accession>
<protein>
    <recommendedName>
        <fullName>Squalene synthase</fullName>
        <shortName>SQS</shortName>
        <shortName>SS</shortName>
        <ecNumber evidence="3 6">2.5.1.21</ecNumber>
    </recommendedName>
    <alternativeName>
        <fullName>FPP:FPP farnesyltransferase</fullName>
    </alternativeName>
    <alternativeName>
        <fullName>Farnesyl-diphosphate farnesyltransferase</fullName>
    </alternativeName>
    <alternativeName>
        <fullName evidence="12">Farnesyl-diphosphate farnesyltransferase 1</fullName>
    </alternativeName>
</protein>
<evidence type="ECO:0000250" key="1">
    <source>
        <dbReference type="UniProtKB" id="Q02769"/>
    </source>
</evidence>
<evidence type="ECO:0000255" key="2"/>
<evidence type="ECO:0000269" key="3">
    <source>
    </source>
</evidence>
<evidence type="ECO:0000269" key="4">
    <source>
    </source>
</evidence>
<evidence type="ECO:0000269" key="5">
    <source>
    </source>
</evidence>
<evidence type="ECO:0000269" key="6">
    <source>
    </source>
</evidence>
<evidence type="ECO:0000269" key="7">
    <source>
    </source>
</evidence>
<evidence type="ECO:0000303" key="8">
    <source>
    </source>
</evidence>
<evidence type="ECO:0000305" key="9"/>
<evidence type="ECO:0000305" key="10">
    <source>
    </source>
</evidence>
<evidence type="ECO:0000305" key="11">
    <source>
    </source>
</evidence>
<evidence type="ECO:0000312" key="12">
    <source>
        <dbReference type="HGNC" id="HGNC:3629"/>
    </source>
</evidence>
<evidence type="ECO:0007744" key="13">
    <source>
        <dbReference type="PDB" id="3WEG"/>
    </source>
</evidence>
<evidence type="ECO:0007744" key="14">
    <source>
        <dbReference type="PDB" id="3WEH"/>
    </source>
</evidence>
<evidence type="ECO:0007829" key="15">
    <source>
        <dbReference type="PDB" id="3VJ8"/>
    </source>
</evidence>
<evidence type="ECO:0007829" key="16">
    <source>
        <dbReference type="PDB" id="3VJC"/>
    </source>
</evidence>
<evidence type="ECO:0007829" key="17">
    <source>
        <dbReference type="PDB" id="3WEK"/>
    </source>
</evidence>
<reference key="1">
    <citation type="journal article" date="1993" name="Mol. Cell. Biol.">
        <title>Conservation between human and fungal squalene synthetases: similarities in structure, function, and regulation.</title>
        <authorList>
            <person name="Robinson G.W."/>
            <person name="Tsay Y.H."/>
            <person name="Kienzle B.K."/>
            <person name="Smith-Monroy C.A."/>
            <person name="Bishop R.W."/>
        </authorList>
    </citation>
    <scope>NUCLEOTIDE SEQUENCE [MRNA] (ISOFORM 1)</scope>
</reference>
<reference key="2">
    <citation type="journal article" date="1993" name="J. Biol. Chem.">
        <title>Transcriptional regulation by lovastatin and 25-hydroxycholesterol in HepG2 cells and molecular cloning and expression of the cDNA for the human hepatic squalene synthase.</title>
        <authorList>
            <person name="Jiang G."/>
            <person name="McKenzie T.L."/>
            <person name="Conrad D.G."/>
            <person name="Shechter I."/>
        </authorList>
    </citation>
    <scope>NUCLEOTIDE SEQUENCE [MRNA] (ISOFORM 1)</scope>
    <source>
        <tissue>Liver</tissue>
    </source>
</reference>
<reference key="3">
    <citation type="journal article" date="1993" name="Gene">
        <title>Cloning, expression and characterisation of the cDNA encoding human hepatic squalene synthase, and its relationship to phytoene synthase.</title>
        <authorList>
            <person name="Summers C."/>
            <person name="Karst F."/>
            <person name="Charles A.D."/>
        </authorList>
    </citation>
    <scope>NUCLEOTIDE SEQUENCE [MRNA] (ISOFORM 1)</scope>
    <source>
        <tissue>Liver</tissue>
    </source>
</reference>
<reference key="4">
    <citation type="journal article" date="1995" name="Arch. Biochem. Biophys.">
        <title>Expression, purification, and characterization of the human squalene synthase: use of yeast and baculoviral systems.</title>
        <authorList>
            <person name="Soltis D.A."/>
            <person name="McMahon G."/>
            <person name="Caplan S.L."/>
            <person name="Dudas D.A."/>
            <person name="Chamberlin H.A."/>
            <person name="Vattay A."/>
            <person name="Dottavio D."/>
            <person name="Rucker M.L."/>
            <person name="Engstrom R.G."/>
            <person name="Cornell-Kennon S.A."/>
        </authorList>
    </citation>
    <scope>NUCLEOTIDE SEQUENCE [MRNA] (ISOFORM 1)</scope>
    <source>
        <tissue>Liver</tissue>
    </source>
</reference>
<reference key="5">
    <citation type="journal article" date="2004" name="Nat. Genet.">
        <title>Complete sequencing and characterization of 21,243 full-length human cDNAs.</title>
        <authorList>
            <person name="Ota T."/>
            <person name="Suzuki Y."/>
            <person name="Nishikawa T."/>
            <person name="Otsuki T."/>
            <person name="Sugiyama T."/>
            <person name="Irie R."/>
            <person name="Wakamatsu A."/>
            <person name="Hayashi K."/>
            <person name="Sato H."/>
            <person name="Nagai K."/>
            <person name="Kimura K."/>
            <person name="Makita H."/>
            <person name="Sekine M."/>
            <person name="Obayashi M."/>
            <person name="Nishi T."/>
            <person name="Shibahara T."/>
            <person name="Tanaka T."/>
            <person name="Ishii S."/>
            <person name="Yamamoto J."/>
            <person name="Saito K."/>
            <person name="Kawai Y."/>
            <person name="Isono Y."/>
            <person name="Nakamura Y."/>
            <person name="Nagahari K."/>
            <person name="Murakami K."/>
            <person name="Yasuda T."/>
            <person name="Iwayanagi T."/>
            <person name="Wagatsuma M."/>
            <person name="Shiratori A."/>
            <person name="Sudo H."/>
            <person name="Hosoiri T."/>
            <person name="Kaku Y."/>
            <person name="Kodaira H."/>
            <person name="Kondo H."/>
            <person name="Sugawara M."/>
            <person name="Takahashi M."/>
            <person name="Kanda K."/>
            <person name="Yokoi T."/>
            <person name="Furuya T."/>
            <person name="Kikkawa E."/>
            <person name="Omura Y."/>
            <person name="Abe K."/>
            <person name="Kamihara K."/>
            <person name="Katsuta N."/>
            <person name="Sato K."/>
            <person name="Tanikawa M."/>
            <person name="Yamazaki M."/>
            <person name="Ninomiya K."/>
            <person name="Ishibashi T."/>
            <person name="Yamashita H."/>
            <person name="Murakawa K."/>
            <person name="Fujimori K."/>
            <person name="Tanai H."/>
            <person name="Kimata M."/>
            <person name="Watanabe M."/>
            <person name="Hiraoka S."/>
            <person name="Chiba Y."/>
            <person name="Ishida S."/>
            <person name="Ono Y."/>
            <person name="Takiguchi S."/>
            <person name="Watanabe S."/>
            <person name="Yosida M."/>
            <person name="Hotuta T."/>
            <person name="Kusano J."/>
            <person name="Kanehori K."/>
            <person name="Takahashi-Fujii A."/>
            <person name="Hara H."/>
            <person name="Tanase T.-O."/>
            <person name="Nomura Y."/>
            <person name="Togiya S."/>
            <person name="Komai F."/>
            <person name="Hara R."/>
            <person name="Takeuchi K."/>
            <person name="Arita M."/>
            <person name="Imose N."/>
            <person name="Musashino K."/>
            <person name="Yuuki H."/>
            <person name="Oshima A."/>
            <person name="Sasaki N."/>
            <person name="Aotsuka S."/>
            <person name="Yoshikawa Y."/>
            <person name="Matsunawa H."/>
            <person name="Ichihara T."/>
            <person name="Shiohata N."/>
            <person name="Sano S."/>
            <person name="Moriya S."/>
            <person name="Momiyama H."/>
            <person name="Satoh N."/>
            <person name="Takami S."/>
            <person name="Terashima Y."/>
            <person name="Suzuki O."/>
            <person name="Nakagawa S."/>
            <person name="Senoh A."/>
            <person name="Mizoguchi H."/>
            <person name="Goto Y."/>
            <person name="Shimizu F."/>
            <person name="Wakebe H."/>
            <person name="Hishigaki H."/>
            <person name="Watanabe T."/>
            <person name="Sugiyama A."/>
            <person name="Takemoto M."/>
            <person name="Kawakami B."/>
            <person name="Yamazaki M."/>
            <person name="Watanabe K."/>
            <person name="Kumagai A."/>
            <person name="Itakura S."/>
            <person name="Fukuzumi Y."/>
            <person name="Fujimori Y."/>
            <person name="Komiyama M."/>
            <person name="Tashiro H."/>
            <person name="Tanigami A."/>
            <person name="Fujiwara T."/>
            <person name="Ono T."/>
            <person name="Yamada K."/>
            <person name="Fujii Y."/>
            <person name="Ozaki K."/>
            <person name="Hirao M."/>
            <person name="Ohmori Y."/>
            <person name="Kawabata A."/>
            <person name="Hikiji T."/>
            <person name="Kobatake N."/>
            <person name="Inagaki H."/>
            <person name="Ikema Y."/>
            <person name="Okamoto S."/>
            <person name="Okitani R."/>
            <person name="Kawakami T."/>
            <person name="Noguchi S."/>
            <person name="Itoh T."/>
            <person name="Shigeta K."/>
            <person name="Senba T."/>
            <person name="Matsumura K."/>
            <person name="Nakajima Y."/>
            <person name="Mizuno T."/>
            <person name="Morinaga M."/>
            <person name="Sasaki M."/>
            <person name="Togashi T."/>
            <person name="Oyama M."/>
            <person name="Hata H."/>
            <person name="Watanabe M."/>
            <person name="Komatsu T."/>
            <person name="Mizushima-Sugano J."/>
            <person name="Satoh T."/>
            <person name="Shirai Y."/>
            <person name="Takahashi Y."/>
            <person name="Nakagawa K."/>
            <person name="Okumura K."/>
            <person name="Nagase T."/>
            <person name="Nomura N."/>
            <person name="Kikuchi H."/>
            <person name="Masuho Y."/>
            <person name="Yamashita R."/>
            <person name="Nakai K."/>
            <person name="Yada T."/>
            <person name="Nakamura Y."/>
            <person name="Ohara O."/>
            <person name="Isogai T."/>
            <person name="Sugano S."/>
        </authorList>
    </citation>
    <scope>NUCLEOTIDE SEQUENCE [LARGE SCALE MRNA] (ISOFORMS 2; 3; 4 AND 5)</scope>
    <source>
        <tissue>Cerebellum</tissue>
        <tissue>Pericardium</tissue>
        <tissue>Subthalamic nucleus</tissue>
        <tissue>Uterus</tissue>
    </source>
</reference>
<reference key="6">
    <citation type="journal article" date="2006" name="Nature">
        <title>DNA sequence and analysis of human chromosome 8.</title>
        <authorList>
            <person name="Nusbaum C."/>
            <person name="Mikkelsen T.S."/>
            <person name="Zody M.C."/>
            <person name="Asakawa S."/>
            <person name="Taudien S."/>
            <person name="Garber M."/>
            <person name="Kodira C.D."/>
            <person name="Schueler M.G."/>
            <person name="Shimizu A."/>
            <person name="Whittaker C.A."/>
            <person name="Chang J.L."/>
            <person name="Cuomo C.A."/>
            <person name="Dewar K."/>
            <person name="FitzGerald M.G."/>
            <person name="Yang X."/>
            <person name="Allen N.R."/>
            <person name="Anderson S."/>
            <person name="Asakawa T."/>
            <person name="Blechschmidt K."/>
            <person name="Bloom T."/>
            <person name="Borowsky M.L."/>
            <person name="Butler J."/>
            <person name="Cook A."/>
            <person name="Corum B."/>
            <person name="DeArellano K."/>
            <person name="DeCaprio D."/>
            <person name="Dooley K.T."/>
            <person name="Dorris L. III"/>
            <person name="Engels R."/>
            <person name="Gloeckner G."/>
            <person name="Hafez N."/>
            <person name="Hagopian D.S."/>
            <person name="Hall J.L."/>
            <person name="Ishikawa S.K."/>
            <person name="Jaffe D.B."/>
            <person name="Kamat A."/>
            <person name="Kudoh J."/>
            <person name="Lehmann R."/>
            <person name="Lokitsang T."/>
            <person name="Macdonald P."/>
            <person name="Major J.E."/>
            <person name="Matthews C.D."/>
            <person name="Mauceli E."/>
            <person name="Menzel U."/>
            <person name="Mihalev A.H."/>
            <person name="Minoshima S."/>
            <person name="Murayama Y."/>
            <person name="Naylor J.W."/>
            <person name="Nicol R."/>
            <person name="Nguyen C."/>
            <person name="O'Leary S.B."/>
            <person name="O'Neill K."/>
            <person name="Parker S.C.J."/>
            <person name="Polley A."/>
            <person name="Raymond C.K."/>
            <person name="Reichwald K."/>
            <person name="Rodriguez J."/>
            <person name="Sasaki T."/>
            <person name="Schilhabel M."/>
            <person name="Siddiqui R."/>
            <person name="Smith C.L."/>
            <person name="Sneddon T.P."/>
            <person name="Talamas J.A."/>
            <person name="Tenzin P."/>
            <person name="Topham K."/>
            <person name="Venkataraman V."/>
            <person name="Wen G."/>
            <person name="Yamazaki S."/>
            <person name="Young S.K."/>
            <person name="Zeng Q."/>
            <person name="Zimmer A.R."/>
            <person name="Rosenthal A."/>
            <person name="Birren B.W."/>
            <person name="Platzer M."/>
            <person name="Shimizu N."/>
            <person name="Lander E.S."/>
        </authorList>
    </citation>
    <scope>NUCLEOTIDE SEQUENCE [LARGE SCALE GENOMIC DNA]</scope>
</reference>
<reference key="7">
    <citation type="journal article" date="2004" name="Genome Res.">
        <title>The status, quality, and expansion of the NIH full-length cDNA project: the Mammalian Gene Collection (MGC).</title>
        <authorList>
            <consortium name="The MGC Project Team"/>
        </authorList>
    </citation>
    <scope>NUCLEOTIDE SEQUENCE [LARGE SCALE MRNA] (ISOFORM 1)</scope>
    <scope>VARIANT ARG-45</scope>
    <source>
        <tissue>Lung</tissue>
        <tissue>Muscle</tissue>
        <tissue>Urinary bladder</tissue>
    </source>
</reference>
<reference key="8">
    <citation type="journal article" date="2011" name="BMC Syst. Biol.">
        <title>Initial characterization of the human central proteome.</title>
        <authorList>
            <person name="Burkard T.R."/>
            <person name="Planyavsky M."/>
            <person name="Kaupe I."/>
            <person name="Breitwieser F.P."/>
            <person name="Buerckstuemmer T."/>
            <person name="Bennett K.L."/>
            <person name="Superti-Furga G."/>
            <person name="Colinge J."/>
        </authorList>
    </citation>
    <scope>IDENTIFICATION BY MASS SPECTROMETRY [LARGE SCALE ANALYSIS]</scope>
</reference>
<reference key="9">
    <citation type="journal article" date="2014" name="J. Proteomics">
        <title>An enzyme assisted RP-RPLC approach for in-depth analysis of human liver phosphoproteome.</title>
        <authorList>
            <person name="Bian Y."/>
            <person name="Song C."/>
            <person name="Cheng K."/>
            <person name="Dong M."/>
            <person name="Wang F."/>
            <person name="Huang J."/>
            <person name="Sun D."/>
            <person name="Wang L."/>
            <person name="Ye M."/>
            <person name="Zou H."/>
        </authorList>
    </citation>
    <scope>IDENTIFICATION BY MASS SPECTROMETRY [LARGE SCALE ANALYSIS]</scope>
    <source>
        <tissue>Liver</tissue>
    </source>
</reference>
<reference key="10">
    <citation type="journal article" date="2015" name="Proteomics">
        <title>N-terminome analysis of the human mitochondrial proteome.</title>
        <authorList>
            <person name="Vaca Jacome A.S."/>
            <person name="Rabilloud T."/>
            <person name="Schaeffer-Reiss C."/>
            <person name="Rompais M."/>
            <person name="Ayoub D."/>
            <person name="Lane L."/>
            <person name="Bairoch A."/>
            <person name="Van Dorsselaer A."/>
            <person name="Carapito C."/>
        </authorList>
    </citation>
    <scope>IDENTIFICATION BY MASS SPECTROMETRY [LARGE SCALE ANALYSIS]</scope>
</reference>
<reference key="11">
    <citation type="journal article" date="2018" name="Am. J. Hum. Genet.">
        <title>Squalene synthase deficiency: clinical, biochemical, and molecular characterization of a defect in cholesterol biosynthesis.</title>
        <authorList>
            <person name="Coman D."/>
            <person name="Vissers L.E.L.M."/>
            <person name="Riley L.G."/>
            <person name="Kwint M.P."/>
            <person name="Hauck R."/>
            <person name="Koster J."/>
            <person name="Geuer S."/>
            <person name="Hopkins S."/>
            <person name="Hallinan B."/>
            <person name="Sweetman L."/>
            <person name="Engelke U.F.H."/>
            <person name="Burrow T.A."/>
            <person name="Cardinal J."/>
            <person name="McGill J."/>
            <person name="Inwood A."/>
            <person name="Gurnsey C."/>
            <person name="Waterham H.R."/>
            <person name="Christodoulou J."/>
            <person name="Wevers R.A."/>
            <person name="Pitt J."/>
        </authorList>
    </citation>
    <scope>INVOLVEMENT IN SQSD</scope>
    <scope>TISSUE SPECIFICITY</scope>
</reference>
<reference key="12">
    <citation type="journal article" date="2000" name="J. Biol. Chem.">
        <title>Crystal structure of human squalene synthase. A key enzyme in cholesterol biosynthesis.</title>
        <authorList>
            <person name="Pandit J."/>
            <person name="Danley D.E."/>
            <person name="Schulte G.K."/>
            <person name="Mazzalupo S."/>
            <person name="Pauly T.A."/>
            <person name="Hayward C.M."/>
            <person name="Hamanaka E.S."/>
            <person name="Thompson J.F."/>
            <person name="Harwood H.J. Jr."/>
        </authorList>
    </citation>
    <scope>X-RAY CRYSTALLOGRAPHY (2.15 ANGSTROMS) OF 39-370</scope>
    <scope>CATALYTIC ACTIVITY</scope>
    <scope>FUNCTION</scope>
</reference>
<reference key="13">
    <citation type="journal article" date="2014" name="Acta Crystallogr. D">
        <title>Structural insights into the catalytic mechanism of human squalene synthase.</title>
        <authorList>
            <person name="Liu C.I."/>
            <person name="Jeng W.Y."/>
            <person name="Chang W.J."/>
            <person name="Shih M.F."/>
            <person name="Ko T.P."/>
            <person name="Wang A.H."/>
        </authorList>
    </citation>
    <scope>X-RAY CRYSTALLOGRAPHY (1.75 ANGSTROMS) OF 31-370 IN COMPLEX WITH MAGNESIUM ION</scope>
    <scope>COFACTOR</scope>
    <scope>NADP BINDING SITES</scope>
    <scope>CATALYTIC ACTIVITY</scope>
    <scope>FUNCTION</scope>
</reference>
<reference key="14">
    <citation type="journal article" date="2008" name="Hum. Mutat.">
        <title>K45R variant of squalene synthase increases total cholesterol levels in two study samples from a French Canadian population.</title>
        <authorList>
            <person name="Do R."/>
            <person name="Pare G."/>
            <person name="Montpetit A."/>
            <person name="Hudson T.J."/>
            <person name="Gaudet D."/>
            <person name="Engert J.C."/>
        </authorList>
    </citation>
    <scope>VARIANT ARG-45</scope>
    <scope>ASSOCIATION WITH PLASMA CHOLESTEROL LEVELS</scope>
</reference>
<proteinExistence type="evidence at protein level"/>
<sequence>MEFVKCLGHPEEFYNLVRFRIGGKRKVMPKMDQDSLSSSLKTCYKYLNQTSRSFAAVIQALDGEMRNAVCIFYLVLRALDTLEDDMTISVEKKVPLLHNFHSFLYQPDWRFMESKEKDRQVLEDFPTISLEFRNLAEKYQTVIADICRRMGIGMAEFLDKHVTSEQEWDKYCHYVAGLVGIGLSRLFSASEFEDPLVGEDTERANSMGLFLQKTNIIRDYLEDQQGGREFWPQEVWSRYVKKLGDFAKPENIDLAVQCLNELITNALHHIPDVITYLSRLRNQSVFNFCAIPQVMAIATLAACYNNQQVFKGAVKIRKGQAVTLMMDATNMPAVKAIIYQYMEEIYHRIPDSDPSSSKTRQIISTIRTQNLPNCQLISRSHYSPIYLSFVMLLAALSWQYLTTLSQVTEDYVQTGEH</sequence>
<name>FDFT_HUMAN</name>
<comment type="function">
    <text evidence="3 6">Catalyzes the condensation of 2 farnesyl pyrophosphate (FPP) moieties to form squalene. Proceeds in two distinct steps. In the first half-reaction, two molecules of FPP react to form the stable presqualene diphosphate intermediate (PSQPP), with concomitant release of a proton and a molecule of inorganic diphosphate. In the second half-reaction, PSQPP undergoes heterolysis, isomerization, and reduction with NADPH or NADH to form squalene. It is the first committed enzyme of the sterol biosynthesis pathway.</text>
</comment>
<comment type="catalytic activity">
    <reaction evidence="3">
        <text>2 (2E,6E)-farnesyl diphosphate + NADPH + H(+) = squalene + 2 diphosphate + NADP(+)</text>
        <dbReference type="Rhea" id="RHEA:32295"/>
        <dbReference type="ChEBI" id="CHEBI:15378"/>
        <dbReference type="ChEBI" id="CHEBI:15440"/>
        <dbReference type="ChEBI" id="CHEBI:33019"/>
        <dbReference type="ChEBI" id="CHEBI:57783"/>
        <dbReference type="ChEBI" id="CHEBI:58349"/>
        <dbReference type="ChEBI" id="CHEBI:175763"/>
        <dbReference type="EC" id="2.5.1.21"/>
    </reaction>
    <physiologicalReaction direction="left-to-right" evidence="10">
        <dbReference type="Rhea" id="RHEA:32296"/>
    </physiologicalReaction>
</comment>
<comment type="catalytic activity">
    <reaction evidence="3">
        <text>2 (2E,6E)-farnesyl diphosphate + NADH + H(+) = squalene + 2 diphosphate + NAD(+)</text>
        <dbReference type="Rhea" id="RHEA:32299"/>
        <dbReference type="ChEBI" id="CHEBI:15378"/>
        <dbReference type="ChEBI" id="CHEBI:15440"/>
        <dbReference type="ChEBI" id="CHEBI:33019"/>
        <dbReference type="ChEBI" id="CHEBI:57540"/>
        <dbReference type="ChEBI" id="CHEBI:57945"/>
        <dbReference type="ChEBI" id="CHEBI:175763"/>
        <dbReference type="EC" id="2.5.1.21"/>
    </reaction>
    <physiologicalReaction direction="left-to-right" evidence="10">
        <dbReference type="Rhea" id="RHEA:32300"/>
    </physiologicalReaction>
</comment>
<comment type="catalytic activity">
    <reaction evidence="3 6">
        <text>2 (2E,6E)-farnesyl diphosphate = presqualene diphosphate + diphosphate</text>
        <dbReference type="Rhea" id="RHEA:22672"/>
        <dbReference type="ChEBI" id="CHEBI:33019"/>
        <dbReference type="ChEBI" id="CHEBI:57310"/>
        <dbReference type="ChEBI" id="CHEBI:175763"/>
    </reaction>
    <physiologicalReaction direction="left-to-right" evidence="11">
        <dbReference type="Rhea" id="RHEA:22673"/>
    </physiologicalReaction>
</comment>
<comment type="catalytic activity">
    <reaction evidence="3 6">
        <text>presqualene diphosphate + NADH + H(+) = squalene + diphosphate + NAD(+)</text>
        <dbReference type="Rhea" id="RHEA:22228"/>
        <dbReference type="ChEBI" id="CHEBI:15378"/>
        <dbReference type="ChEBI" id="CHEBI:15440"/>
        <dbReference type="ChEBI" id="CHEBI:33019"/>
        <dbReference type="ChEBI" id="CHEBI:57310"/>
        <dbReference type="ChEBI" id="CHEBI:57540"/>
        <dbReference type="ChEBI" id="CHEBI:57945"/>
    </reaction>
    <physiologicalReaction direction="left-to-right" evidence="11">
        <dbReference type="Rhea" id="RHEA:22229"/>
    </physiologicalReaction>
</comment>
<comment type="catalytic activity">
    <reaction evidence="3 6">
        <text>presqualene diphosphate + NADPH + H(+) = squalene + diphosphate + NADP(+)</text>
        <dbReference type="Rhea" id="RHEA:22232"/>
        <dbReference type="ChEBI" id="CHEBI:15378"/>
        <dbReference type="ChEBI" id="CHEBI:15440"/>
        <dbReference type="ChEBI" id="CHEBI:33019"/>
        <dbReference type="ChEBI" id="CHEBI:57310"/>
        <dbReference type="ChEBI" id="CHEBI:57783"/>
        <dbReference type="ChEBI" id="CHEBI:58349"/>
    </reaction>
    <physiologicalReaction direction="left-to-right" evidence="11">
        <dbReference type="Rhea" id="RHEA:22233"/>
    </physiologicalReaction>
</comment>
<comment type="cofactor">
    <cofactor evidence="6">
        <name>Mg(2+)</name>
        <dbReference type="ChEBI" id="CHEBI:18420"/>
    </cofactor>
</comment>
<comment type="pathway">
    <text evidence="9">Terpene metabolism; lanosterol biosynthesis; lanosterol from farnesyl diphosphate: step 1/3.</text>
</comment>
<comment type="interaction">
    <interactant intactId="EBI-714550">
        <id>P37268</id>
    </interactant>
    <interactant intactId="EBI-13059134">
        <id>Q13520</id>
        <label>AQP6</label>
    </interactant>
    <organismsDiffer>false</organismsDiffer>
    <experiments>3</experiments>
</comment>
<comment type="interaction">
    <interactant intactId="EBI-714550">
        <id>P37268</id>
    </interactant>
    <interactant intactId="EBI-11343438">
        <id>Q3SXY8</id>
        <label>ARL13B</label>
    </interactant>
    <organismsDiffer>false</organismsDiffer>
    <experiments>3</experiments>
</comment>
<comment type="interaction">
    <interactant intactId="EBI-714550">
        <id>P37268</id>
    </interactant>
    <interactant intactId="EBI-12222807">
        <id>P04233-2</id>
        <label>CD74</label>
    </interactant>
    <organismsDiffer>false</organismsDiffer>
    <experiments>3</experiments>
</comment>
<comment type="interaction">
    <interactant intactId="EBI-714550">
        <id>P37268</id>
    </interactant>
    <interactant intactId="EBI-7797864">
        <id>P11912</id>
        <label>CD79A</label>
    </interactant>
    <organismsDiffer>false</organismsDiffer>
    <experiments>3</experiments>
</comment>
<comment type="interaction">
    <interactant intactId="EBI-714550">
        <id>P37268</id>
    </interactant>
    <interactant intactId="EBI-1043514">
        <id>O75503</id>
        <label>CLN5</label>
    </interactant>
    <organismsDiffer>false</organismsDiffer>
    <experiments>3</experiments>
</comment>
<comment type="interaction">
    <interactant intactId="EBI-714550">
        <id>P37268</id>
    </interactant>
    <interactant intactId="EBI-625022">
        <id>O43889-2</id>
        <label>CREB3</label>
    </interactant>
    <organismsDiffer>false</organismsDiffer>
    <experiments>3</experiments>
</comment>
<comment type="interaction">
    <interactant intactId="EBI-714550">
        <id>P37268</id>
    </interactant>
    <interactant intactId="EBI-18535450">
        <id>Q9GZR5</id>
        <label>ELOVL4</label>
    </interactant>
    <organismsDiffer>false</organismsDiffer>
    <experiments>3</experiments>
</comment>
<comment type="interaction">
    <interactant intactId="EBI-714550">
        <id>P37268</id>
    </interactant>
    <interactant intactId="EBI-18304435">
        <id>Q5JX71</id>
        <label>FAM209A</label>
    </interactant>
    <organismsDiffer>false</organismsDiffer>
    <experiments>3</experiments>
</comment>
<comment type="interaction">
    <interactant intactId="EBI-714550">
        <id>P37268</id>
    </interactant>
    <interactant intactId="EBI-17458373">
        <id>P48165</id>
        <label>GJA8</label>
    </interactant>
    <organismsDiffer>false</organismsDiffer>
    <experiments>3</experiments>
</comment>
<comment type="interaction">
    <interactant intactId="EBI-714550">
        <id>P37268</id>
    </interactant>
    <interactant intactId="EBI-13345167">
        <id>Q8TDT2</id>
        <label>GPR152</label>
    </interactant>
    <organismsDiffer>false</organismsDiffer>
    <experiments>3</experiments>
</comment>
<comment type="interaction">
    <interactant intactId="EBI-714550">
        <id>P37268</id>
    </interactant>
    <interactant intactId="EBI-10266796">
        <id>Q8N5M9</id>
        <label>JAGN1</label>
    </interactant>
    <organismsDiffer>false</organismsDiffer>
    <experiments>3</experiments>
</comment>
<comment type="interaction">
    <interactant intactId="EBI-714550">
        <id>P37268</id>
    </interactant>
    <interactant intactId="EBI-10247000">
        <id>Q6IBW4-4</id>
        <label>NCAPH2</label>
    </interactant>
    <organismsDiffer>false</organismsDiffer>
    <experiments>3</experiments>
</comment>
<comment type="interaction">
    <interactant intactId="EBI-714550">
        <id>P37268</id>
    </interactant>
    <interactant intactId="EBI-7037612">
        <id>Q96RD7</id>
        <label>PANX1</label>
    </interactant>
    <organismsDiffer>false</organismsDiffer>
    <experiments>3</experiments>
</comment>
<comment type="interaction">
    <interactant intactId="EBI-714550">
        <id>P37268</id>
    </interactant>
    <interactant intactId="EBI-3923031">
        <id>Q14973</id>
        <label>SLC10A1</label>
    </interactant>
    <organismsDiffer>false</organismsDiffer>
    <experiments>3</experiments>
</comment>
<comment type="interaction">
    <interactant intactId="EBI-714550">
        <id>P37268</id>
    </interactant>
    <interactant intactId="EBI-17295964">
        <id>Q9NQQ7-3</id>
        <label>SLC35C2</label>
    </interactant>
    <organismsDiffer>false</organismsDiffer>
    <experiments>3</experiments>
</comment>
<comment type="interaction">
    <interactant intactId="EBI-714550">
        <id>P37268</id>
    </interactant>
    <interactant intactId="EBI-12947623">
        <id>Q96MV1</id>
        <label>TLCD4</label>
    </interactant>
    <organismsDiffer>false</organismsDiffer>
    <experiments>3</experiments>
</comment>
<comment type="interaction">
    <interactant intactId="EBI-714550">
        <id>P37268</id>
    </interactant>
    <interactant intactId="EBI-6447886">
        <id>Q9Y320</id>
        <label>TMX2</label>
    </interactant>
    <organismsDiffer>false</organismsDiffer>
    <experiments>3</experiments>
</comment>
<comment type="subcellular location">
    <subcellularLocation>
        <location evidence="1">Endoplasmic reticulum membrane</location>
        <topology evidence="2">Multi-pass membrane protein</topology>
    </subcellularLocation>
</comment>
<comment type="alternative products">
    <event type="alternative splicing"/>
    <isoform>
        <id>P37268-1</id>
        <name>1</name>
        <sequence type="displayed"/>
    </isoform>
    <isoform>
        <id>P37268-2</id>
        <name>2</name>
        <sequence type="described" ref="VSP_056283"/>
    </isoform>
    <isoform>
        <id>P37268-3</id>
        <name>3</name>
        <sequence type="described" ref="VSP_056282"/>
    </isoform>
    <isoform>
        <id>P37268-4</id>
        <name>4</name>
        <sequence type="described" ref="VSP_056517"/>
    </isoform>
    <isoform>
        <id>P37268-5</id>
        <name>5</name>
        <sequence type="described" ref="VSP_056518"/>
    </isoform>
</comment>
<comment type="tissue specificity">
    <text evidence="7">Widely expressed.</text>
</comment>
<comment type="disease" evidence="7">
    <disease id="DI-05357">
        <name>Squalene synthase deficiency</name>
        <acronym>SQSD</acronym>
        <description>An autosomal recessive disorder characterized by profound developmental delay, brain abnormalities, 2/3 syndactyly of the toes, facial dysmorphisms, low total and LDL-cholesterol, and abnormal urine organic acids.</description>
        <dbReference type="MIM" id="618156"/>
    </disease>
    <text>The disease is caused by variants affecting the gene represented in this entry.</text>
</comment>
<comment type="similarity">
    <text evidence="9">Belongs to the phytoene/squalene synthase family.</text>
</comment>